<keyword id="KW-0963">Cytoplasm</keyword>
<keyword id="KW-0269">Exonuclease</keyword>
<keyword id="KW-0271">Exosome</keyword>
<keyword id="KW-0378">Hydrolase</keyword>
<keyword id="KW-0540">Nuclease</keyword>
<keyword id="KW-1185">Reference proteome</keyword>
<gene>
    <name evidence="1" type="primary">rrp41</name>
    <name type="ordered locus">PF1568</name>
</gene>
<comment type="function">
    <text evidence="1">Catalytic component of the exosome, which is a complex involved in RNA degradation. Has 3'-&gt;5' exoribonuclease activity. Can also synthesize heteromeric RNA-tails.</text>
</comment>
<comment type="subunit">
    <text evidence="1">Component of the archaeal exosome complex. Forms a hexameric ring-like arrangement composed of 3 Rrp41-Rrp42 heterodimers. The hexameric ring associates with a trimer of Rrp4 and/or Csl4 subunits.</text>
</comment>
<comment type="subcellular location">
    <subcellularLocation>
        <location evidence="1">Cytoplasm</location>
    </subcellularLocation>
</comment>
<comment type="similarity">
    <text evidence="1">Belongs to the RNase PH family. Rrp41 subfamily.</text>
</comment>
<feature type="chain" id="PRO_0000139987" description="Exosome complex component Rrp41">
    <location>
        <begin position="1"/>
        <end position="250"/>
    </location>
</feature>
<accession>Q8U0L9</accession>
<name>RRP41_PYRFU</name>
<dbReference type="EC" id="3.1.13.-" evidence="1"/>
<dbReference type="EMBL" id="AE009950">
    <property type="protein sequence ID" value="AAL81692.1"/>
    <property type="molecule type" value="Genomic_DNA"/>
</dbReference>
<dbReference type="RefSeq" id="WP_011012714.1">
    <property type="nucleotide sequence ID" value="NZ_CP023154.1"/>
</dbReference>
<dbReference type="SMR" id="Q8U0L9"/>
<dbReference type="STRING" id="186497.PF1568"/>
<dbReference type="PaxDb" id="186497-PF1568"/>
<dbReference type="GeneID" id="41713392"/>
<dbReference type="KEGG" id="pfu:PF1568"/>
<dbReference type="PATRIC" id="fig|186497.12.peg.1634"/>
<dbReference type="eggNOG" id="arCOG01575">
    <property type="taxonomic scope" value="Archaea"/>
</dbReference>
<dbReference type="HOGENOM" id="CLU_063514_0_0_2"/>
<dbReference type="OrthoDB" id="24266at2157"/>
<dbReference type="PhylomeDB" id="Q8U0L9"/>
<dbReference type="Proteomes" id="UP000001013">
    <property type="component" value="Chromosome"/>
</dbReference>
<dbReference type="GO" id="GO:0000177">
    <property type="term" value="C:cytoplasmic exosome (RNase complex)"/>
    <property type="evidence" value="ECO:0007669"/>
    <property type="project" value="TreeGrafter"/>
</dbReference>
<dbReference type="GO" id="GO:0000175">
    <property type="term" value="F:3'-5'-RNA exonuclease activity"/>
    <property type="evidence" value="ECO:0007669"/>
    <property type="project" value="UniProtKB-UniRule"/>
</dbReference>
<dbReference type="GO" id="GO:0003723">
    <property type="term" value="F:RNA binding"/>
    <property type="evidence" value="ECO:0007669"/>
    <property type="project" value="TreeGrafter"/>
</dbReference>
<dbReference type="GO" id="GO:0010467">
    <property type="term" value="P:gene expression"/>
    <property type="evidence" value="ECO:0007669"/>
    <property type="project" value="UniProtKB-ARBA"/>
</dbReference>
<dbReference type="GO" id="GO:0016075">
    <property type="term" value="P:rRNA catabolic process"/>
    <property type="evidence" value="ECO:0007669"/>
    <property type="project" value="TreeGrafter"/>
</dbReference>
<dbReference type="CDD" id="cd11366">
    <property type="entry name" value="RNase_PH_archRRP41"/>
    <property type="match status" value="1"/>
</dbReference>
<dbReference type="FunFam" id="3.30.230.70:FF:000004">
    <property type="entry name" value="Exosome complex component Rrp41"/>
    <property type="match status" value="1"/>
</dbReference>
<dbReference type="Gene3D" id="3.30.230.70">
    <property type="entry name" value="GHMP Kinase, N-terminal domain"/>
    <property type="match status" value="1"/>
</dbReference>
<dbReference type="HAMAP" id="MF_00591">
    <property type="entry name" value="Exosome_Rrp41"/>
    <property type="match status" value="1"/>
</dbReference>
<dbReference type="InterPro" id="IPR001247">
    <property type="entry name" value="ExoRNase_PH_dom1"/>
</dbReference>
<dbReference type="InterPro" id="IPR015847">
    <property type="entry name" value="ExoRNase_PH_dom2"/>
</dbReference>
<dbReference type="InterPro" id="IPR036345">
    <property type="entry name" value="ExoRNase_PH_dom2_sf"/>
</dbReference>
<dbReference type="InterPro" id="IPR027408">
    <property type="entry name" value="PNPase/RNase_PH_dom_sf"/>
</dbReference>
<dbReference type="InterPro" id="IPR020568">
    <property type="entry name" value="Ribosomal_Su5_D2-typ_SF"/>
</dbReference>
<dbReference type="InterPro" id="IPR050080">
    <property type="entry name" value="RNase_PH"/>
</dbReference>
<dbReference type="InterPro" id="IPR011807">
    <property type="entry name" value="Rrp41"/>
</dbReference>
<dbReference type="NCBIfam" id="TIGR02065">
    <property type="entry name" value="ECX1"/>
    <property type="match status" value="1"/>
</dbReference>
<dbReference type="PANTHER" id="PTHR11953">
    <property type="entry name" value="EXOSOME COMPLEX COMPONENT"/>
    <property type="match status" value="1"/>
</dbReference>
<dbReference type="PANTHER" id="PTHR11953:SF0">
    <property type="entry name" value="EXOSOME COMPLEX COMPONENT RRP41"/>
    <property type="match status" value="1"/>
</dbReference>
<dbReference type="Pfam" id="PF01138">
    <property type="entry name" value="RNase_PH"/>
    <property type="match status" value="1"/>
</dbReference>
<dbReference type="Pfam" id="PF03725">
    <property type="entry name" value="RNase_PH_C"/>
    <property type="match status" value="1"/>
</dbReference>
<dbReference type="SUPFAM" id="SSF55666">
    <property type="entry name" value="Ribonuclease PH domain 2-like"/>
    <property type="match status" value="1"/>
</dbReference>
<dbReference type="SUPFAM" id="SSF54211">
    <property type="entry name" value="Ribosomal protein S5 domain 2-like"/>
    <property type="match status" value="1"/>
</dbReference>
<evidence type="ECO:0000255" key="1">
    <source>
        <dbReference type="HAMAP-Rule" id="MF_00591"/>
    </source>
</evidence>
<sequence>MMLKPEGLKLIDENGRRLDGRKKYELRPIKMKVGVLKNANGSAYIEWGKNKIIAAVYGPREIHPKHLQRPDRAILRVRYNMAPFSVEERKKPGPDRRSIEISKVIRGALEPALILEMFPRTAIDVFIEVLQADAGTRVAGITAASLALADAGIPMRDLVAACSAGKIEGEIVLDLNKEEDNYGEADVPVAIMPIKNDITLLQMDGYLTKEEFIEAVKLAIKGAKAVYQKQREALKEKYLKIAQEVEGSEQ</sequence>
<organism>
    <name type="scientific">Pyrococcus furiosus (strain ATCC 43587 / DSM 3638 / JCM 8422 / Vc1)</name>
    <dbReference type="NCBI Taxonomy" id="186497"/>
    <lineage>
        <taxon>Archaea</taxon>
        <taxon>Methanobacteriati</taxon>
        <taxon>Methanobacteriota</taxon>
        <taxon>Thermococci</taxon>
        <taxon>Thermococcales</taxon>
        <taxon>Thermococcaceae</taxon>
        <taxon>Pyrococcus</taxon>
    </lineage>
</organism>
<protein>
    <recommendedName>
        <fullName evidence="1">Exosome complex component Rrp41</fullName>
        <ecNumber evidence="1">3.1.13.-</ecNumber>
    </recommendedName>
</protein>
<reference key="1">
    <citation type="journal article" date="1999" name="Genetics">
        <title>Divergence of the hyperthermophilic archaea Pyrococcus furiosus and P. horikoshii inferred from complete genomic sequences.</title>
        <authorList>
            <person name="Maeder D.L."/>
            <person name="Weiss R.B."/>
            <person name="Dunn D.M."/>
            <person name="Cherry J.L."/>
            <person name="Gonzalez J.M."/>
            <person name="DiRuggiero J."/>
            <person name="Robb F.T."/>
        </authorList>
    </citation>
    <scope>NUCLEOTIDE SEQUENCE [LARGE SCALE GENOMIC DNA]</scope>
    <source>
        <strain>ATCC 43587 / DSM 3638 / JCM 8422 / Vc1</strain>
    </source>
</reference>
<proteinExistence type="inferred from homology"/>